<proteinExistence type="inferred from homology"/>
<protein>
    <recommendedName>
        <fullName evidence="1">UPF0201 protein Pars_1985</fullName>
    </recommendedName>
</protein>
<accession>A4WMB5</accession>
<evidence type="ECO:0000255" key="1">
    <source>
        <dbReference type="HAMAP-Rule" id="MF_01112"/>
    </source>
</evidence>
<feature type="chain" id="PRO_1000065153" description="UPF0201 protein Pars_1985">
    <location>
        <begin position="1"/>
        <end position="143"/>
    </location>
</feature>
<dbReference type="EMBL" id="CP000660">
    <property type="protein sequence ID" value="ABP51532.1"/>
    <property type="molecule type" value="Genomic_DNA"/>
</dbReference>
<dbReference type="SMR" id="A4WMB5"/>
<dbReference type="STRING" id="340102.Pars_1985"/>
<dbReference type="KEGG" id="pas:Pars_1985"/>
<dbReference type="HOGENOM" id="CLU_134829_1_0_2"/>
<dbReference type="OrthoDB" id="7819at2157"/>
<dbReference type="PhylomeDB" id="A4WMB5"/>
<dbReference type="Proteomes" id="UP000001567">
    <property type="component" value="Chromosome"/>
</dbReference>
<dbReference type="Gene3D" id="3.30.1440.10">
    <property type="match status" value="1"/>
</dbReference>
<dbReference type="HAMAP" id="MF_01112">
    <property type="entry name" value="UPF0201"/>
    <property type="match status" value="1"/>
</dbReference>
<dbReference type="InterPro" id="IPR002739">
    <property type="entry name" value="PAB1135-like"/>
</dbReference>
<dbReference type="InterPro" id="IPR022803">
    <property type="entry name" value="Ribosomal_uL5_dom_sf"/>
</dbReference>
<dbReference type="PANTHER" id="PTHR39652">
    <property type="entry name" value="UPF0201 PROTEIN TK1335"/>
    <property type="match status" value="1"/>
</dbReference>
<dbReference type="PANTHER" id="PTHR39652:SF1">
    <property type="entry name" value="UPF0201 PROTEIN TK1335"/>
    <property type="match status" value="1"/>
</dbReference>
<dbReference type="Pfam" id="PF01877">
    <property type="entry name" value="RNA_binding"/>
    <property type="match status" value="1"/>
</dbReference>
<dbReference type="SUPFAM" id="SSF55282">
    <property type="entry name" value="RL5-like"/>
    <property type="match status" value="1"/>
</dbReference>
<gene>
    <name type="ordered locus">Pars_1985</name>
</gene>
<organism>
    <name type="scientific">Pyrobaculum arsenaticum (strain DSM 13514 / JCM 11321 / PZ6)</name>
    <dbReference type="NCBI Taxonomy" id="340102"/>
    <lineage>
        <taxon>Archaea</taxon>
        <taxon>Thermoproteota</taxon>
        <taxon>Thermoprotei</taxon>
        <taxon>Thermoproteales</taxon>
        <taxon>Thermoproteaceae</taxon>
        <taxon>Pyrobaculum</taxon>
    </lineage>
</organism>
<reference key="1">
    <citation type="submission" date="2007-04" db="EMBL/GenBank/DDBJ databases">
        <title>Complete sequence of Pyrobaculum arsenaticum DSM 13514.</title>
        <authorList>
            <consortium name="US DOE Joint Genome Institute"/>
            <person name="Copeland A."/>
            <person name="Lucas S."/>
            <person name="Lapidus A."/>
            <person name="Barry K."/>
            <person name="Glavina del Rio T."/>
            <person name="Dalin E."/>
            <person name="Tice H."/>
            <person name="Pitluck S."/>
            <person name="Chain P."/>
            <person name="Malfatti S."/>
            <person name="Shin M."/>
            <person name="Vergez L."/>
            <person name="Schmutz J."/>
            <person name="Larimer F."/>
            <person name="Land M."/>
            <person name="Hauser L."/>
            <person name="Kyrpides N."/>
            <person name="Mikhailova N."/>
            <person name="Cozen A.E."/>
            <person name="Fitz-Gibbon S.T."/>
            <person name="House C.H."/>
            <person name="Saltikov C."/>
            <person name="Lowe T.M."/>
            <person name="Richardson P."/>
        </authorList>
    </citation>
    <scope>NUCLEOTIDE SEQUENCE [LARGE SCALE GENOMIC DNA]</scope>
    <source>
        <strain>ATCC 700994 / DSM 13514 / JCM 11321 / PZ6</strain>
    </source>
</reference>
<sequence>MKVEVVVEVRHTENKQKVIHALENIFTPKKIEEKRSDVGTVLIASCEGHECLEKLRSAIWRQGIQDAARSVIARGIVAEDTVVFSVNKQAAYAGVVSFVTEPNESPLGPITFTVKTSNTRQFLDWIAPRTYRGRVYYQAPPPD</sequence>
<name>Y1985_PYRAR</name>
<comment type="similarity">
    <text evidence="1">Belongs to the UPF0201 family.</text>
</comment>